<evidence type="ECO:0000255" key="1"/>
<evidence type="ECO:0000255" key="2">
    <source>
        <dbReference type="PROSITE-ProRule" id="PRU01103"/>
    </source>
</evidence>
<evidence type="ECO:0000269" key="3">
    <source>
    </source>
</evidence>
<evidence type="ECO:0000303" key="4">
    <source>
    </source>
</evidence>
<evidence type="ECO:0000305" key="5"/>
<evidence type="ECO:0000312" key="6">
    <source>
        <dbReference type="EMBL" id="PKC43661.1"/>
    </source>
</evidence>
<evidence type="ECO:0000312" key="7">
    <source>
        <dbReference type="Proteomes" id="UP000232684"/>
    </source>
</evidence>
<keyword id="KW-0064">Aspartyl protease</keyword>
<keyword id="KW-0963">Cytoplasm</keyword>
<keyword id="KW-0378">Hydrolase</keyword>
<keyword id="KW-0645">Protease</keyword>
<keyword id="KW-0732">Signal</keyword>
<keyword id="KW-0865">Zymogen</keyword>
<gene>
    <name evidence="4" type="primary">PMVII</name>
    <name evidence="6" type="ORF">CK202_4891</name>
</gene>
<feature type="signal peptide" evidence="1">
    <location>
        <begin position="1"/>
        <end position="24"/>
    </location>
</feature>
<feature type="propeptide" id="PRO_0000453697" evidence="5">
    <location>
        <begin position="25"/>
        <end status="unknown"/>
    </location>
</feature>
<feature type="chain" id="PRO_5014198737" description="Plasmepsin VII" evidence="1">
    <location>
        <begin status="unknown"/>
        <end position="450"/>
    </location>
</feature>
<feature type="domain" description="Peptidase A1" evidence="2">
    <location>
        <begin position="92"/>
        <end position="441"/>
    </location>
</feature>
<feature type="active site" evidence="2">
    <location>
        <position position="111"/>
    </location>
</feature>
<feature type="active site" evidence="2">
    <location>
        <position position="324"/>
    </location>
</feature>
<comment type="subcellular location">
    <subcellularLocation>
        <location evidence="3">Cytoplasm</location>
    </subcellularLocation>
</comment>
<comment type="developmental stage">
    <text evidence="3">Expressed in zygote and ookinete (at protein level) (PubMed:26911483). Expressed in gametocytes, zygote and ookinete (PubMed:26911483).</text>
</comment>
<comment type="biotechnology">
    <text evidence="3">High doses of antibodies against PMVII partially reduce infectivity in A.stephensi mosquito.</text>
</comment>
<comment type="similarity">
    <text evidence="5">Belongs to the peptidase A1 family.</text>
</comment>
<comment type="caution">
    <text evidence="5">It is unclear if PMVII is glycosylated as other members of the same enzyme family, i.e. PMI and PMII, are not.</text>
</comment>
<protein>
    <recommendedName>
        <fullName evidence="6">Plasmepsin VII</fullName>
        <shortName evidence="4">PfPMVII</shortName>
        <ecNumber evidence="5">3.4.23.-</ecNumber>
    </recommendedName>
    <alternativeName>
        <fullName evidence="5">Plasmepsin 7</fullName>
    </alternativeName>
</protein>
<name>PLM7_PLAFO</name>
<accession>A0A2I0BRF1</accession>
<organism evidence="7">
    <name type="scientific">Plasmodium falciparum (isolate NF54)</name>
    <dbReference type="NCBI Taxonomy" id="5843"/>
    <lineage>
        <taxon>Eukaryota</taxon>
        <taxon>Sar</taxon>
        <taxon>Alveolata</taxon>
        <taxon>Apicomplexa</taxon>
        <taxon>Aconoidasida</taxon>
        <taxon>Haemosporida</taxon>
        <taxon>Plasmodiidae</taxon>
        <taxon>Plasmodium</taxon>
        <taxon>Plasmodium (Laverania)</taxon>
    </lineage>
</organism>
<sequence length="450" mass="52328">MNKNIIQIYLFVFILLLKQHIVILKNEEFTNPYSIRKKDIKAIVNVNNKLKSINIHKLDNINKKDLLGSYNENYILIKLKKQDIFSKKLSTYYGEVQIGEQSENNMNVLFDTGSSQVWILNDTCKNSLCNNIHSKYKRTKSFVYKYDKKGLPSVIEIFYLSGKIVAFEGYDTIYLGKKLKIPHTNISFATKVDIPILEEFKWDGIIGLGFQNGDSIKRGIKPFLDILKDDKILTNKNYKNQFGYYLSDKEGYITLGGIDNRLKNTPDEEIIWTPVSTEMGYWTIQIMGIRKEYVNNHFEENKEEEEVIVKYEAFHDGGKNSIIDTGTYLIYAPKNTMENYLKDLKINNCDEKYNLPHLIFQIKSDEIKTIKGSAIIEIVLTPNDYVIEYVDKKNNTKECILGIQPDEQSEEDNVDGWTLGQVFLKAYYTIFDKDNLKIGFVRSKRNVTLR</sequence>
<reference evidence="7" key="1">
    <citation type="submission" date="2017-11" db="EMBL/GenBank/DDBJ databases">
        <title>Plasmodium falciparum NF54 genome assembly.</title>
        <authorList>
            <person name="Bryant J.M."/>
            <person name="Baumgarten S."/>
            <person name="Scheidig-Benatar C."/>
            <person name="Scherf A."/>
        </authorList>
    </citation>
    <scope>NUCLEOTIDE SEQUENCE [LARGE SCALE GENOMIC DNA]</scope>
    <source>
        <strain evidence="7">NF54</strain>
    </source>
</reference>
<reference evidence="5" key="2">
    <citation type="journal article" date="2016" name="Malar. J.">
        <title>Plasmodium falciparum ookinete expression of plasmepsin VII and plasmepsin X.</title>
        <authorList>
            <person name="Li F."/>
            <person name="Bounkeua V."/>
            <person name="Pettersen K."/>
            <person name="Vinetz J.M."/>
        </authorList>
    </citation>
    <scope>SUBCELLULAR LOCATION</scope>
    <scope>DEVELOPMENTAL STAGE</scope>
    <scope>BIOTECHNOLOGY</scope>
</reference>
<dbReference type="EC" id="3.4.23.-" evidence="5"/>
<dbReference type="EMBL" id="NYMT01000016">
    <property type="protein sequence ID" value="PKC43661.1"/>
    <property type="molecule type" value="Genomic_DNA"/>
</dbReference>
<dbReference type="SMR" id="A0A2I0BRF1"/>
<dbReference type="Proteomes" id="UP000232684">
    <property type="component" value="Unassembled WGS sequence"/>
</dbReference>
<dbReference type="GO" id="GO:0005737">
    <property type="term" value="C:cytoplasm"/>
    <property type="evidence" value="ECO:0007669"/>
    <property type="project" value="UniProtKB-SubCell"/>
</dbReference>
<dbReference type="GO" id="GO:0004190">
    <property type="term" value="F:aspartic-type endopeptidase activity"/>
    <property type="evidence" value="ECO:0007669"/>
    <property type="project" value="UniProtKB-KW"/>
</dbReference>
<dbReference type="GO" id="GO:0006508">
    <property type="term" value="P:proteolysis"/>
    <property type="evidence" value="ECO:0007669"/>
    <property type="project" value="UniProtKB-KW"/>
</dbReference>
<dbReference type="CDD" id="cd05471">
    <property type="entry name" value="pepsin_like"/>
    <property type="match status" value="1"/>
</dbReference>
<dbReference type="FunFam" id="2.40.70.10:FF:000106">
    <property type="entry name" value="Plasmepsin VII"/>
    <property type="match status" value="1"/>
</dbReference>
<dbReference type="Gene3D" id="2.40.70.10">
    <property type="entry name" value="Acid Proteases"/>
    <property type="match status" value="2"/>
</dbReference>
<dbReference type="InterPro" id="IPR001461">
    <property type="entry name" value="Aspartic_peptidase_A1"/>
</dbReference>
<dbReference type="InterPro" id="IPR034164">
    <property type="entry name" value="Pepsin-like_dom"/>
</dbReference>
<dbReference type="InterPro" id="IPR033121">
    <property type="entry name" value="PEPTIDASE_A1"/>
</dbReference>
<dbReference type="InterPro" id="IPR021109">
    <property type="entry name" value="Peptidase_aspartic_dom_sf"/>
</dbReference>
<dbReference type="PANTHER" id="PTHR47966">
    <property type="entry name" value="BETA-SITE APP-CLEAVING ENZYME, ISOFORM A-RELATED"/>
    <property type="match status" value="1"/>
</dbReference>
<dbReference type="PANTHER" id="PTHR47966:SF51">
    <property type="entry name" value="BETA-SITE APP-CLEAVING ENZYME, ISOFORM A-RELATED"/>
    <property type="match status" value="1"/>
</dbReference>
<dbReference type="Pfam" id="PF00026">
    <property type="entry name" value="Asp"/>
    <property type="match status" value="1"/>
</dbReference>
<dbReference type="PRINTS" id="PR00792">
    <property type="entry name" value="PEPSIN"/>
</dbReference>
<dbReference type="SUPFAM" id="SSF50630">
    <property type="entry name" value="Acid proteases"/>
    <property type="match status" value="1"/>
</dbReference>
<dbReference type="PROSITE" id="PS51767">
    <property type="entry name" value="PEPTIDASE_A1"/>
    <property type="match status" value="1"/>
</dbReference>
<proteinExistence type="evidence at protein level"/>